<sequence length="301" mass="33140">MANITMKELLEAGVHFGHQTKRWDPRMKEYIFGERNGIYIIDLQKTLKMFKDASKYVTDMCAQGKVILFVGTKRQAQDAIAEEANRCGMYYINNRWLGGLLTNWVTVQKSVKRLQELDEMATDGRYDLLTKKEVIRLERERKHLQANLAGIKNMRRLPDAIFVVDSNNEAIAVKEARKLGIPVVAVVDTNCDPTVVDYVIPGNDDALRAIRLFTSKIADSVIEGVQMVGDKQFAAEMEGVNTDVQAVAEGEEAPAAEVAAPVAEAAAETEDVDLEAALGGGIRKSPAVVNALDEAEAAESL</sequence>
<accession>C1F401</accession>
<gene>
    <name evidence="1" type="primary">rpsB</name>
    <name type="ordered locus">ACP_2946</name>
</gene>
<comment type="similarity">
    <text evidence="1">Belongs to the universal ribosomal protein uS2 family.</text>
</comment>
<keyword id="KW-1185">Reference proteome</keyword>
<keyword id="KW-0687">Ribonucleoprotein</keyword>
<keyword id="KW-0689">Ribosomal protein</keyword>
<evidence type="ECO:0000255" key="1">
    <source>
        <dbReference type="HAMAP-Rule" id="MF_00291"/>
    </source>
</evidence>
<evidence type="ECO:0000305" key="2"/>
<dbReference type="EMBL" id="CP001472">
    <property type="protein sequence ID" value="ACO31985.1"/>
    <property type="molecule type" value="Genomic_DNA"/>
</dbReference>
<dbReference type="RefSeq" id="WP_015897996.1">
    <property type="nucleotide sequence ID" value="NC_012483.1"/>
</dbReference>
<dbReference type="SMR" id="C1F401"/>
<dbReference type="FunCoup" id="C1F401">
    <property type="interactions" value="679"/>
</dbReference>
<dbReference type="STRING" id="240015.ACP_2946"/>
<dbReference type="KEGG" id="aca:ACP_2946"/>
<dbReference type="eggNOG" id="COG0052">
    <property type="taxonomic scope" value="Bacteria"/>
</dbReference>
<dbReference type="HOGENOM" id="CLU_040318_2_0_0"/>
<dbReference type="InParanoid" id="C1F401"/>
<dbReference type="OrthoDB" id="9808036at2"/>
<dbReference type="Proteomes" id="UP000002207">
    <property type="component" value="Chromosome"/>
</dbReference>
<dbReference type="GO" id="GO:0022627">
    <property type="term" value="C:cytosolic small ribosomal subunit"/>
    <property type="evidence" value="ECO:0007669"/>
    <property type="project" value="TreeGrafter"/>
</dbReference>
<dbReference type="GO" id="GO:0003735">
    <property type="term" value="F:structural constituent of ribosome"/>
    <property type="evidence" value="ECO:0007669"/>
    <property type="project" value="InterPro"/>
</dbReference>
<dbReference type="GO" id="GO:0006412">
    <property type="term" value="P:translation"/>
    <property type="evidence" value="ECO:0007669"/>
    <property type="project" value="UniProtKB-UniRule"/>
</dbReference>
<dbReference type="CDD" id="cd01425">
    <property type="entry name" value="RPS2"/>
    <property type="match status" value="1"/>
</dbReference>
<dbReference type="FunFam" id="1.10.287.610:FF:000001">
    <property type="entry name" value="30S ribosomal protein S2"/>
    <property type="match status" value="1"/>
</dbReference>
<dbReference type="Gene3D" id="3.40.50.10490">
    <property type="entry name" value="Glucose-6-phosphate isomerase like protein, domain 1"/>
    <property type="match status" value="1"/>
</dbReference>
<dbReference type="Gene3D" id="1.10.287.610">
    <property type="entry name" value="Helix hairpin bin"/>
    <property type="match status" value="1"/>
</dbReference>
<dbReference type="HAMAP" id="MF_00291_B">
    <property type="entry name" value="Ribosomal_uS2_B"/>
    <property type="match status" value="1"/>
</dbReference>
<dbReference type="InterPro" id="IPR001865">
    <property type="entry name" value="Ribosomal_uS2"/>
</dbReference>
<dbReference type="InterPro" id="IPR005706">
    <property type="entry name" value="Ribosomal_uS2_bac/mit/plastid"/>
</dbReference>
<dbReference type="InterPro" id="IPR018130">
    <property type="entry name" value="Ribosomal_uS2_CS"/>
</dbReference>
<dbReference type="InterPro" id="IPR023591">
    <property type="entry name" value="Ribosomal_uS2_flav_dom_sf"/>
</dbReference>
<dbReference type="NCBIfam" id="TIGR01011">
    <property type="entry name" value="rpsB_bact"/>
    <property type="match status" value="1"/>
</dbReference>
<dbReference type="PANTHER" id="PTHR12534">
    <property type="entry name" value="30S RIBOSOMAL PROTEIN S2 PROKARYOTIC AND ORGANELLAR"/>
    <property type="match status" value="1"/>
</dbReference>
<dbReference type="PANTHER" id="PTHR12534:SF0">
    <property type="entry name" value="SMALL RIBOSOMAL SUBUNIT PROTEIN US2M"/>
    <property type="match status" value="1"/>
</dbReference>
<dbReference type="Pfam" id="PF00318">
    <property type="entry name" value="Ribosomal_S2"/>
    <property type="match status" value="1"/>
</dbReference>
<dbReference type="PRINTS" id="PR00395">
    <property type="entry name" value="RIBOSOMALS2"/>
</dbReference>
<dbReference type="SUPFAM" id="SSF52313">
    <property type="entry name" value="Ribosomal protein S2"/>
    <property type="match status" value="1"/>
</dbReference>
<dbReference type="PROSITE" id="PS00962">
    <property type="entry name" value="RIBOSOMAL_S2_1"/>
    <property type="match status" value="1"/>
</dbReference>
<dbReference type="PROSITE" id="PS00963">
    <property type="entry name" value="RIBOSOMAL_S2_2"/>
    <property type="match status" value="1"/>
</dbReference>
<feature type="chain" id="PRO_1000194311" description="Small ribosomal subunit protein uS2">
    <location>
        <begin position="1"/>
        <end position="301"/>
    </location>
</feature>
<reference key="1">
    <citation type="journal article" date="2009" name="Appl. Environ. Microbiol.">
        <title>Three genomes from the phylum Acidobacteria provide insight into the lifestyles of these microorganisms in soils.</title>
        <authorList>
            <person name="Ward N.L."/>
            <person name="Challacombe J.F."/>
            <person name="Janssen P.H."/>
            <person name="Henrissat B."/>
            <person name="Coutinho P.M."/>
            <person name="Wu M."/>
            <person name="Xie G."/>
            <person name="Haft D.H."/>
            <person name="Sait M."/>
            <person name="Badger J."/>
            <person name="Barabote R.D."/>
            <person name="Bradley B."/>
            <person name="Brettin T.S."/>
            <person name="Brinkac L.M."/>
            <person name="Bruce D."/>
            <person name="Creasy T."/>
            <person name="Daugherty S.C."/>
            <person name="Davidsen T.M."/>
            <person name="DeBoy R.T."/>
            <person name="Detter J.C."/>
            <person name="Dodson R.J."/>
            <person name="Durkin A.S."/>
            <person name="Ganapathy A."/>
            <person name="Gwinn-Giglio M."/>
            <person name="Han C.S."/>
            <person name="Khouri H."/>
            <person name="Kiss H."/>
            <person name="Kothari S.P."/>
            <person name="Madupu R."/>
            <person name="Nelson K.E."/>
            <person name="Nelson W.C."/>
            <person name="Paulsen I."/>
            <person name="Penn K."/>
            <person name="Ren Q."/>
            <person name="Rosovitz M.J."/>
            <person name="Selengut J.D."/>
            <person name="Shrivastava S."/>
            <person name="Sullivan S.A."/>
            <person name="Tapia R."/>
            <person name="Thompson L.S."/>
            <person name="Watkins K.L."/>
            <person name="Yang Q."/>
            <person name="Yu C."/>
            <person name="Zafar N."/>
            <person name="Zhou L."/>
            <person name="Kuske C.R."/>
        </authorList>
    </citation>
    <scope>NUCLEOTIDE SEQUENCE [LARGE SCALE GENOMIC DNA]</scope>
    <source>
        <strain>ATCC 51196 / DSM 11244 / BCRC 80197 / JCM 7670 / NBRC 15755 / NCIMB 13165 / 161</strain>
    </source>
</reference>
<organism>
    <name type="scientific">Acidobacterium capsulatum (strain ATCC 51196 / DSM 11244 / BCRC 80197 / JCM 7670 / NBRC 15755 / NCIMB 13165 / 161)</name>
    <dbReference type="NCBI Taxonomy" id="240015"/>
    <lineage>
        <taxon>Bacteria</taxon>
        <taxon>Pseudomonadati</taxon>
        <taxon>Acidobacteriota</taxon>
        <taxon>Terriglobia</taxon>
        <taxon>Terriglobales</taxon>
        <taxon>Acidobacteriaceae</taxon>
        <taxon>Acidobacterium</taxon>
    </lineage>
</organism>
<name>RS2_ACIC5</name>
<proteinExistence type="inferred from homology"/>
<protein>
    <recommendedName>
        <fullName evidence="1">Small ribosomal subunit protein uS2</fullName>
    </recommendedName>
    <alternativeName>
        <fullName evidence="2">30S ribosomal protein S2</fullName>
    </alternativeName>
</protein>